<protein>
    <recommendedName>
        <fullName>Required for respiratory growth protein 9, mitochondrial</fullName>
    </recommendedName>
</protein>
<accession>E3L408</accession>
<comment type="function">
    <text evidence="1">Required for respiratory activity and maintenance and expression of the mitochondrial genome.</text>
</comment>
<comment type="subcellular location">
    <subcellularLocation>
        <location evidence="1">Mitochondrion</location>
    </subcellularLocation>
</comment>
<comment type="similarity">
    <text evidence="4">Belongs to the RRG9 family.</text>
</comment>
<reference key="1">
    <citation type="journal article" date="2011" name="Proc. Natl. Acad. Sci. U.S.A.">
        <title>Obligate biotrophy features unraveled by the genomic analysis of rust fungi.</title>
        <authorList>
            <person name="Duplessis S."/>
            <person name="Cuomo C.A."/>
            <person name="Lin Y.-C."/>
            <person name="Aerts A."/>
            <person name="Tisserant E."/>
            <person name="Veneault-Fourrey C."/>
            <person name="Joly D.L."/>
            <person name="Hacquard S."/>
            <person name="Amselem J."/>
            <person name="Cantarel B.L."/>
            <person name="Chiu R."/>
            <person name="Coutinho P.M."/>
            <person name="Feau N."/>
            <person name="Field M."/>
            <person name="Frey P."/>
            <person name="Gelhaye E."/>
            <person name="Goldberg J."/>
            <person name="Grabherr M.G."/>
            <person name="Kodira C.D."/>
            <person name="Kohler A."/>
            <person name="Kuees U."/>
            <person name="Lindquist E.A."/>
            <person name="Lucas S.M."/>
            <person name="Mago R."/>
            <person name="Mauceli E."/>
            <person name="Morin E."/>
            <person name="Murat C."/>
            <person name="Pangilinan J.L."/>
            <person name="Park R."/>
            <person name="Pearson M."/>
            <person name="Quesneville H."/>
            <person name="Rouhier N."/>
            <person name="Sakthikumar S."/>
            <person name="Salamov A.A."/>
            <person name="Schmutz J."/>
            <person name="Selles B."/>
            <person name="Shapiro H."/>
            <person name="Tanguay P."/>
            <person name="Tuskan G.A."/>
            <person name="Henrissat B."/>
            <person name="Van de Peer Y."/>
            <person name="Rouze P."/>
            <person name="Ellis J.G."/>
            <person name="Dodds P.N."/>
            <person name="Schein J.E."/>
            <person name="Zhong S."/>
            <person name="Hamelin R.C."/>
            <person name="Grigoriev I.V."/>
            <person name="Szabo L.J."/>
            <person name="Martin F."/>
        </authorList>
    </citation>
    <scope>NUCLEOTIDE SEQUENCE [LARGE SCALE GENOMIC DNA]</scope>
    <source>
        <strain>CRL 75-36-700-3 / race SCCL</strain>
    </source>
</reference>
<reference key="2">
    <citation type="journal article" date="2017" name="G3 (Bethesda)">
        <title>Comparative analysis highlights variable genome content of wheat rusts and divergence of the mating loci.</title>
        <authorList>
            <person name="Cuomo C.A."/>
            <person name="Bakkeren G."/>
            <person name="Khalil H.B."/>
            <person name="Panwar V."/>
            <person name="Joly D."/>
            <person name="Linning R."/>
            <person name="Sakthikumar S."/>
            <person name="Song X."/>
            <person name="Adiconis X."/>
            <person name="Fan L."/>
            <person name="Goldberg J.M."/>
            <person name="Levin J.Z."/>
            <person name="Young S."/>
            <person name="Zeng Q."/>
            <person name="Anikster Y."/>
            <person name="Bruce M."/>
            <person name="Wang M."/>
            <person name="Yin C."/>
            <person name="McCallum B."/>
            <person name="Szabo L.J."/>
            <person name="Hulbert S."/>
            <person name="Chen X."/>
            <person name="Fellers J.P."/>
        </authorList>
    </citation>
    <scope>GENOME REANNOTATION</scope>
    <source>
        <strain>CRL 75-36-700-3 / race SCCL</strain>
    </source>
</reference>
<evidence type="ECO:0000250" key="1"/>
<evidence type="ECO:0000255" key="2"/>
<evidence type="ECO:0000256" key="3">
    <source>
        <dbReference type="SAM" id="MobiDB-lite"/>
    </source>
</evidence>
<evidence type="ECO:0000305" key="4"/>
<organism>
    <name type="scientific">Puccinia graminis f. sp. tritici (strain CRL 75-36-700-3 / race SCCL)</name>
    <name type="common">Black stem rust fungus</name>
    <dbReference type="NCBI Taxonomy" id="418459"/>
    <lineage>
        <taxon>Eukaryota</taxon>
        <taxon>Fungi</taxon>
        <taxon>Dikarya</taxon>
        <taxon>Basidiomycota</taxon>
        <taxon>Pucciniomycotina</taxon>
        <taxon>Pucciniomycetes</taxon>
        <taxon>Pucciniales</taxon>
        <taxon>Pucciniaceae</taxon>
        <taxon>Puccinia</taxon>
    </lineage>
</organism>
<gene>
    <name type="primary">RRG9</name>
    <name type="ORF">PGTG_17140</name>
</gene>
<sequence length="207" mass="23443">MNSSTIRRSIGLTGSLARQKRVNRSSPLPAAQDPQAGPSGSKAVTEEAPENRLFNHSQEQKDEDKPQWLIHKEALRRKFPDGWNPPKKISRPSMALLRTLHQTDPNQFSLSILSEKFKISPEAVRRILRSKWEPNQETAKKTEQRQQTVGAAHSSDGWVHHEKLETDQIPLNLAHTLQSSLPSSSKISSSSFPRKSQPRSSYNHFKK</sequence>
<name>RRG9_PUCGT</name>
<feature type="transit peptide" description="Mitochondrion" evidence="2">
    <location>
        <begin position="1"/>
        <end position="17"/>
    </location>
</feature>
<feature type="chain" id="PRO_0000407961" description="Required for respiratory growth protein 9, mitochondrial">
    <location>
        <begin position="18"/>
        <end position="207"/>
    </location>
</feature>
<feature type="region of interest" description="Disordered" evidence="3">
    <location>
        <begin position="1"/>
        <end position="87"/>
    </location>
</feature>
<feature type="region of interest" description="Disordered" evidence="3">
    <location>
        <begin position="133"/>
        <end position="207"/>
    </location>
</feature>
<feature type="compositionally biased region" description="Basic and acidic residues" evidence="3">
    <location>
        <begin position="58"/>
        <end position="80"/>
    </location>
</feature>
<feature type="compositionally biased region" description="Basic and acidic residues" evidence="3">
    <location>
        <begin position="133"/>
        <end position="144"/>
    </location>
</feature>
<feature type="compositionally biased region" description="Low complexity" evidence="3">
    <location>
        <begin position="177"/>
        <end position="201"/>
    </location>
</feature>
<keyword id="KW-0496">Mitochondrion</keyword>
<keyword id="KW-1185">Reference proteome</keyword>
<keyword id="KW-0809">Transit peptide</keyword>
<proteinExistence type="inferred from homology"/>
<dbReference type="EMBL" id="DS178344">
    <property type="protein sequence ID" value="EFP91283.2"/>
    <property type="molecule type" value="Genomic_DNA"/>
</dbReference>
<dbReference type="RefSeq" id="XP_003335702.2">
    <property type="nucleotide sequence ID" value="XM_003335654.2"/>
</dbReference>
<dbReference type="SMR" id="E3L408"/>
<dbReference type="STRING" id="418459.E3L408"/>
<dbReference type="EnsemblFungi" id="EFP91283">
    <property type="protein sequence ID" value="EFP91283"/>
    <property type="gene ID" value="PGTG_17140"/>
</dbReference>
<dbReference type="GeneID" id="10529031"/>
<dbReference type="KEGG" id="pgr:PGTG_17140"/>
<dbReference type="VEuPathDB" id="FungiDB:PGTG_17140"/>
<dbReference type="eggNOG" id="ENOG502S7IA">
    <property type="taxonomic scope" value="Eukaryota"/>
</dbReference>
<dbReference type="HOGENOM" id="CLU_1355255_0_0_1"/>
<dbReference type="InParanoid" id="E3L408"/>
<dbReference type="OrthoDB" id="5578174at2759"/>
<dbReference type="Proteomes" id="UP000008783">
    <property type="component" value="Unassembled WGS sequence"/>
</dbReference>
<dbReference type="GO" id="GO:0005739">
    <property type="term" value="C:mitochondrion"/>
    <property type="evidence" value="ECO:0007669"/>
    <property type="project" value="UniProtKB-SubCell"/>
</dbReference>
<dbReference type="GO" id="GO:0005634">
    <property type="term" value="C:nucleus"/>
    <property type="evidence" value="ECO:0000318"/>
    <property type="project" value="GO_Central"/>
</dbReference>
<dbReference type="InterPro" id="IPR010487">
    <property type="entry name" value="NGRN/Rrg9"/>
</dbReference>
<dbReference type="PANTHER" id="PTHR13475">
    <property type="entry name" value="NEUGRIN"/>
    <property type="match status" value="1"/>
</dbReference>
<dbReference type="PANTHER" id="PTHR13475:SF3">
    <property type="entry name" value="NEUGRIN"/>
    <property type="match status" value="1"/>
</dbReference>
<dbReference type="Pfam" id="PF06413">
    <property type="entry name" value="Neugrin"/>
    <property type="match status" value="1"/>
</dbReference>